<sequence length="466" mass="50162">MSSLTRLTLAQVAQKLKAREVSAVEVLDACLTQVRSTEKQISAYVCVLEDQARAAAHATDADIRGRWKGPLHGVPVAVKDLYDIAGVPTTASSPAHELDAQQDPARVRRLQDAGAVILGKTHTHEFAYGRITPKSRNPRDPGRTPGGSSGGSAATVAACCVYLATGTDTGGSVRIPSSMCNTVGLKQPTVGRVHGAGVSSLSWSLDHPGPITRTVEDTALMLQVMAGFDPADPRSLDEPVPSYAEGLGQGVKGLRWGVPKNYFFDRVDPEVESAVRAAIDQLKELGAELVEVEVPMAEQIIPVKFGIMLPEASAYHRTMLRESPELYTADVRILLELGDLVTATDYLQAQRVRTLMQRAVAEMYQRIDVLIAPTLPIPAARSGEEVHTWPDGTVEALVMAYTRFTSFGNVTGLPTLNLPCGFSKDGLRSACRSGRPLDEKTLLRAGLAYEKATTWHQRHPELIGAG</sequence>
<proteinExistence type="inferred from homology"/>
<comment type="catalytic activity">
    <reaction>
        <text>a monocarboxylic acid amide + H2O = a monocarboxylate + NH4(+)</text>
        <dbReference type="Rhea" id="RHEA:12020"/>
        <dbReference type="ChEBI" id="CHEBI:15377"/>
        <dbReference type="ChEBI" id="CHEBI:28938"/>
        <dbReference type="ChEBI" id="CHEBI:35757"/>
        <dbReference type="ChEBI" id="CHEBI:83628"/>
        <dbReference type="EC" id="3.5.1.4"/>
    </reaction>
</comment>
<comment type="similarity">
    <text evidence="3">Belongs to the amidase family.</text>
</comment>
<reference key="1">
    <citation type="journal article" date="1998" name="DNA Cell Biol.">
        <title>Cloning and nucleotide sequence of amidase gene from Pseudomonas putida.</title>
        <authorList>
            <person name="Wu S."/>
            <person name="Fallon R.D."/>
            <person name="Payne M.S."/>
        </authorList>
    </citation>
    <scope>NUCLEOTIDE SEQUENCE [GENOMIC DNA]</scope>
    <source>
        <strain>NRRL 18668</strain>
    </source>
</reference>
<organism>
    <name type="scientific">Pseudomonas putida</name>
    <name type="common">Arthrobacter siderocapsulatus</name>
    <dbReference type="NCBI Taxonomy" id="303"/>
    <lineage>
        <taxon>Bacteria</taxon>
        <taxon>Pseudomonadati</taxon>
        <taxon>Pseudomonadota</taxon>
        <taxon>Gammaproteobacteria</taxon>
        <taxon>Pseudomonadales</taxon>
        <taxon>Pseudomonadaceae</taxon>
        <taxon>Pseudomonas</taxon>
    </lineage>
</organism>
<keyword id="KW-0378">Hydrolase</keyword>
<dbReference type="EC" id="3.5.1.4"/>
<dbReference type="EMBL" id="U89363">
    <property type="protein sequence ID" value="AAC18422.1"/>
    <property type="molecule type" value="Genomic_DNA"/>
</dbReference>
<dbReference type="SMR" id="O69768"/>
<dbReference type="GO" id="GO:0004040">
    <property type="term" value="F:amidase activity"/>
    <property type="evidence" value="ECO:0007669"/>
    <property type="project" value="UniProtKB-EC"/>
</dbReference>
<dbReference type="Gene3D" id="3.90.1300.10">
    <property type="entry name" value="Amidase signature (AS) domain"/>
    <property type="match status" value="1"/>
</dbReference>
<dbReference type="InterPro" id="IPR000120">
    <property type="entry name" value="Amidase"/>
</dbReference>
<dbReference type="InterPro" id="IPR020556">
    <property type="entry name" value="Amidase_CS"/>
</dbReference>
<dbReference type="InterPro" id="IPR023631">
    <property type="entry name" value="Amidase_dom"/>
</dbReference>
<dbReference type="InterPro" id="IPR036928">
    <property type="entry name" value="AS_sf"/>
</dbReference>
<dbReference type="PANTHER" id="PTHR11895:SF7">
    <property type="entry name" value="GLUTAMYL-TRNA(GLN) AMIDOTRANSFERASE SUBUNIT A, MITOCHONDRIAL"/>
    <property type="match status" value="1"/>
</dbReference>
<dbReference type="PANTHER" id="PTHR11895">
    <property type="entry name" value="TRANSAMIDASE"/>
    <property type="match status" value="1"/>
</dbReference>
<dbReference type="Pfam" id="PF01425">
    <property type="entry name" value="Amidase"/>
    <property type="match status" value="1"/>
</dbReference>
<dbReference type="SUPFAM" id="SSF75304">
    <property type="entry name" value="Amidase signature (AS) enzymes"/>
    <property type="match status" value="1"/>
</dbReference>
<dbReference type="PROSITE" id="PS00571">
    <property type="entry name" value="AMIDASES"/>
    <property type="match status" value="1"/>
</dbReference>
<accession>O69768</accession>
<name>AMID_PSEPU</name>
<feature type="chain" id="PRO_0000105125" description="Amidase">
    <location>
        <begin position="1"/>
        <end position="466"/>
    </location>
</feature>
<feature type="region of interest" description="Disordered" evidence="2">
    <location>
        <begin position="128"/>
        <end position="152"/>
    </location>
</feature>
<feature type="active site" description="Charge relay system" evidence="1">
    <location>
        <position position="79"/>
    </location>
</feature>
<feature type="active site" description="Charge relay system" evidence="1">
    <location>
        <position position="148"/>
    </location>
</feature>
<feature type="active site" description="Acyl-ester intermediate" evidence="1">
    <location>
        <position position="172"/>
    </location>
</feature>
<evidence type="ECO:0000250" key="1"/>
<evidence type="ECO:0000256" key="2">
    <source>
        <dbReference type="SAM" id="MobiDB-lite"/>
    </source>
</evidence>
<evidence type="ECO:0000305" key="3"/>
<protein>
    <recommendedName>
        <fullName>Amidase</fullName>
        <ecNumber>3.5.1.4</ecNumber>
    </recommendedName>
</protein>